<dbReference type="EMBL" id="AE017226">
    <property type="protein sequence ID" value="AAS11275.1"/>
    <property type="molecule type" value="Genomic_DNA"/>
</dbReference>
<dbReference type="RefSeq" id="NP_971394.1">
    <property type="nucleotide sequence ID" value="NC_002967.9"/>
</dbReference>
<dbReference type="RefSeq" id="WP_002670027.1">
    <property type="nucleotide sequence ID" value="NC_002967.9"/>
</dbReference>
<dbReference type="SMR" id="Q73PL5"/>
<dbReference type="STRING" id="243275.TDE_0784"/>
<dbReference type="PaxDb" id="243275-TDE_0784"/>
<dbReference type="GeneID" id="2740662"/>
<dbReference type="KEGG" id="tde:TDE_0784"/>
<dbReference type="PATRIC" id="fig|243275.7.peg.757"/>
<dbReference type="eggNOG" id="COG0098">
    <property type="taxonomic scope" value="Bacteria"/>
</dbReference>
<dbReference type="HOGENOM" id="CLU_065898_2_2_12"/>
<dbReference type="OrthoDB" id="9809045at2"/>
<dbReference type="Proteomes" id="UP000008212">
    <property type="component" value="Chromosome"/>
</dbReference>
<dbReference type="GO" id="GO:0015935">
    <property type="term" value="C:small ribosomal subunit"/>
    <property type="evidence" value="ECO:0007669"/>
    <property type="project" value="InterPro"/>
</dbReference>
<dbReference type="GO" id="GO:0019843">
    <property type="term" value="F:rRNA binding"/>
    <property type="evidence" value="ECO:0007669"/>
    <property type="project" value="UniProtKB-UniRule"/>
</dbReference>
<dbReference type="GO" id="GO:0003735">
    <property type="term" value="F:structural constituent of ribosome"/>
    <property type="evidence" value="ECO:0007669"/>
    <property type="project" value="InterPro"/>
</dbReference>
<dbReference type="GO" id="GO:0006412">
    <property type="term" value="P:translation"/>
    <property type="evidence" value="ECO:0007669"/>
    <property type="project" value="UniProtKB-UniRule"/>
</dbReference>
<dbReference type="FunFam" id="3.30.160.20:FF:000001">
    <property type="entry name" value="30S ribosomal protein S5"/>
    <property type="match status" value="1"/>
</dbReference>
<dbReference type="FunFam" id="3.30.230.10:FF:000002">
    <property type="entry name" value="30S ribosomal protein S5"/>
    <property type="match status" value="1"/>
</dbReference>
<dbReference type="Gene3D" id="3.30.160.20">
    <property type="match status" value="1"/>
</dbReference>
<dbReference type="Gene3D" id="3.30.230.10">
    <property type="match status" value="1"/>
</dbReference>
<dbReference type="HAMAP" id="MF_01307_B">
    <property type="entry name" value="Ribosomal_uS5_B"/>
    <property type="match status" value="1"/>
</dbReference>
<dbReference type="InterPro" id="IPR020568">
    <property type="entry name" value="Ribosomal_Su5_D2-typ_SF"/>
</dbReference>
<dbReference type="InterPro" id="IPR000851">
    <property type="entry name" value="Ribosomal_uS5"/>
</dbReference>
<dbReference type="InterPro" id="IPR005712">
    <property type="entry name" value="Ribosomal_uS5_bac-type"/>
</dbReference>
<dbReference type="InterPro" id="IPR005324">
    <property type="entry name" value="Ribosomal_uS5_C"/>
</dbReference>
<dbReference type="InterPro" id="IPR013810">
    <property type="entry name" value="Ribosomal_uS5_N"/>
</dbReference>
<dbReference type="InterPro" id="IPR018192">
    <property type="entry name" value="Ribosomal_uS5_N_CS"/>
</dbReference>
<dbReference type="InterPro" id="IPR014721">
    <property type="entry name" value="Ribsml_uS5_D2-typ_fold_subgr"/>
</dbReference>
<dbReference type="NCBIfam" id="TIGR01021">
    <property type="entry name" value="rpsE_bact"/>
    <property type="match status" value="1"/>
</dbReference>
<dbReference type="PANTHER" id="PTHR48277">
    <property type="entry name" value="MITOCHONDRIAL RIBOSOMAL PROTEIN S5"/>
    <property type="match status" value="1"/>
</dbReference>
<dbReference type="PANTHER" id="PTHR48277:SF1">
    <property type="entry name" value="MITOCHONDRIAL RIBOSOMAL PROTEIN S5"/>
    <property type="match status" value="1"/>
</dbReference>
<dbReference type="Pfam" id="PF00333">
    <property type="entry name" value="Ribosomal_S5"/>
    <property type="match status" value="1"/>
</dbReference>
<dbReference type="Pfam" id="PF03719">
    <property type="entry name" value="Ribosomal_S5_C"/>
    <property type="match status" value="1"/>
</dbReference>
<dbReference type="SUPFAM" id="SSF54768">
    <property type="entry name" value="dsRNA-binding domain-like"/>
    <property type="match status" value="1"/>
</dbReference>
<dbReference type="SUPFAM" id="SSF54211">
    <property type="entry name" value="Ribosomal protein S5 domain 2-like"/>
    <property type="match status" value="1"/>
</dbReference>
<dbReference type="PROSITE" id="PS00585">
    <property type="entry name" value="RIBOSOMAL_S5"/>
    <property type="match status" value="1"/>
</dbReference>
<dbReference type="PROSITE" id="PS50881">
    <property type="entry name" value="S5_DSRBD"/>
    <property type="match status" value="1"/>
</dbReference>
<protein>
    <recommendedName>
        <fullName evidence="1">Small ribosomal subunit protein uS5</fullName>
    </recommendedName>
    <alternativeName>
        <fullName evidence="2">30S ribosomal protein S5</fullName>
    </alternativeName>
</protein>
<sequence>MSHQKESKRDNQHTDKEYVEKLVKLNRTAKVVKGGRRFSFSALTVVGDQKGRVGYGFGKANDVSDAIRKSIEKAKANMVTFPLKNGTIPHEVQGKFKGSSVLLRPACSGTGIIAGGTIRAIMEAAGATDLLSKSLGSSSAVNVVKATFDAASLLMDGKKIAKSRGKTLLDVWG</sequence>
<name>RS5_TREDE</name>
<proteinExistence type="inferred from homology"/>
<evidence type="ECO:0000255" key="1">
    <source>
        <dbReference type="HAMAP-Rule" id="MF_01307"/>
    </source>
</evidence>
<evidence type="ECO:0000305" key="2"/>
<comment type="function">
    <text evidence="1">With S4 and S12 plays an important role in translational accuracy.</text>
</comment>
<comment type="function">
    <text evidence="1">Located at the back of the 30S subunit body where it stabilizes the conformation of the head with respect to the body.</text>
</comment>
<comment type="subunit">
    <text evidence="1">Part of the 30S ribosomal subunit. Contacts proteins S4 and S8.</text>
</comment>
<comment type="domain">
    <text>The N-terminal domain interacts with the head of the 30S subunit; the C-terminal domain interacts with the body and contacts protein S4. The interaction surface between S4 and S5 is involved in control of translational fidelity.</text>
</comment>
<comment type="similarity">
    <text evidence="1">Belongs to the universal ribosomal protein uS5 family.</text>
</comment>
<gene>
    <name evidence="1" type="primary">rpsE</name>
    <name type="ordered locus">TDE_0784</name>
</gene>
<organism>
    <name type="scientific">Treponema denticola (strain ATCC 35405 / DSM 14222 / CIP 103919 / JCM 8153 / KCTC 15104)</name>
    <dbReference type="NCBI Taxonomy" id="243275"/>
    <lineage>
        <taxon>Bacteria</taxon>
        <taxon>Pseudomonadati</taxon>
        <taxon>Spirochaetota</taxon>
        <taxon>Spirochaetia</taxon>
        <taxon>Spirochaetales</taxon>
        <taxon>Treponemataceae</taxon>
        <taxon>Treponema</taxon>
    </lineage>
</organism>
<accession>Q73PL5</accession>
<keyword id="KW-1185">Reference proteome</keyword>
<keyword id="KW-0687">Ribonucleoprotein</keyword>
<keyword id="KW-0689">Ribosomal protein</keyword>
<keyword id="KW-0694">RNA-binding</keyword>
<keyword id="KW-0699">rRNA-binding</keyword>
<reference key="1">
    <citation type="journal article" date="2004" name="Proc. Natl. Acad. Sci. U.S.A.">
        <title>Comparison of the genome of the oral pathogen Treponema denticola with other spirochete genomes.</title>
        <authorList>
            <person name="Seshadri R."/>
            <person name="Myers G.S.A."/>
            <person name="Tettelin H."/>
            <person name="Eisen J.A."/>
            <person name="Heidelberg J.F."/>
            <person name="Dodson R.J."/>
            <person name="Davidsen T.M."/>
            <person name="DeBoy R.T."/>
            <person name="Fouts D.E."/>
            <person name="Haft D.H."/>
            <person name="Selengut J."/>
            <person name="Ren Q."/>
            <person name="Brinkac L.M."/>
            <person name="Madupu R."/>
            <person name="Kolonay J.F."/>
            <person name="Durkin S.A."/>
            <person name="Daugherty S.C."/>
            <person name="Shetty J."/>
            <person name="Shvartsbeyn A."/>
            <person name="Gebregeorgis E."/>
            <person name="Geer K."/>
            <person name="Tsegaye G."/>
            <person name="Malek J.A."/>
            <person name="Ayodeji B."/>
            <person name="Shatsman S."/>
            <person name="McLeod M.P."/>
            <person name="Smajs D."/>
            <person name="Howell J.K."/>
            <person name="Pal S."/>
            <person name="Amin A."/>
            <person name="Vashisth P."/>
            <person name="McNeill T.Z."/>
            <person name="Xiang Q."/>
            <person name="Sodergren E."/>
            <person name="Baca E."/>
            <person name="Weinstock G.M."/>
            <person name="Norris S.J."/>
            <person name="Fraser C.M."/>
            <person name="Paulsen I.T."/>
        </authorList>
    </citation>
    <scope>NUCLEOTIDE SEQUENCE [LARGE SCALE GENOMIC DNA]</scope>
    <source>
        <strain>ATCC 35405 / DSM 14222 / CIP 103919 / JCM 8153 / KCTC 15104</strain>
    </source>
</reference>
<feature type="chain" id="PRO_0000131624" description="Small ribosomal subunit protein uS5">
    <location>
        <begin position="1"/>
        <end position="173"/>
    </location>
</feature>
<feature type="domain" description="S5 DRBM" evidence="1">
    <location>
        <begin position="18"/>
        <end position="81"/>
    </location>
</feature>